<proteinExistence type="inferred from homology"/>
<name>RL6_AERHH</name>
<comment type="function">
    <text evidence="1">This protein binds to the 23S rRNA, and is important in its secondary structure. It is located near the subunit interface in the base of the L7/L12 stalk, and near the tRNA binding site of the peptidyltransferase center.</text>
</comment>
<comment type="subunit">
    <text evidence="1">Part of the 50S ribosomal subunit.</text>
</comment>
<comment type="similarity">
    <text evidence="1">Belongs to the universal ribosomal protein uL6 family.</text>
</comment>
<organism>
    <name type="scientific">Aeromonas hydrophila subsp. hydrophila (strain ATCC 7966 / DSM 30187 / BCRC 13018 / CCUG 14551 / JCM 1027 / KCTC 2358 / NCIMB 9240 / NCTC 8049)</name>
    <dbReference type="NCBI Taxonomy" id="380703"/>
    <lineage>
        <taxon>Bacteria</taxon>
        <taxon>Pseudomonadati</taxon>
        <taxon>Pseudomonadota</taxon>
        <taxon>Gammaproteobacteria</taxon>
        <taxon>Aeromonadales</taxon>
        <taxon>Aeromonadaceae</taxon>
        <taxon>Aeromonas</taxon>
    </lineage>
</organism>
<evidence type="ECO:0000255" key="1">
    <source>
        <dbReference type="HAMAP-Rule" id="MF_01365"/>
    </source>
</evidence>
<evidence type="ECO:0000305" key="2"/>
<reference key="1">
    <citation type="journal article" date="2006" name="J. Bacteriol.">
        <title>Genome sequence of Aeromonas hydrophila ATCC 7966T: jack of all trades.</title>
        <authorList>
            <person name="Seshadri R."/>
            <person name="Joseph S.W."/>
            <person name="Chopra A.K."/>
            <person name="Sha J."/>
            <person name="Shaw J."/>
            <person name="Graf J."/>
            <person name="Haft D.H."/>
            <person name="Wu M."/>
            <person name="Ren Q."/>
            <person name="Rosovitz M.J."/>
            <person name="Madupu R."/>
            <person name="Tallon L."/>
            <person name="Kim M."/>
            <person name="Jin S."/>
            <person name="Vuong H."/>
            <person name="Stine O.C."/>
            <person name="Ali A."/>
            <person name="Horneman A.J."/>
            <person name="Heidelberg J.F."/>
        </authorList>
    </citation>
    <scope>NUCLEOTIDE SEQUENCE [LARGE SCALE GENOMIC DNA]</scope>
    <source>
        <strain>ATCC 7966 / DSM 30187 / BCRC 13018 / CCUG 14551 / JCM 1027 / KCTC 2358 / NCIMB 9240 / NCTC 8049</strain>
    </source>
</reference>
<sequence>MSRVAKAPVTIPAGVEVTLNGQELSIKGGKGSLVRSIHAGVEVTKEDNVLKFAPRDGIAGADAQAGTARALVNNMVIGVTQGFERKLQLVGVGYKASIKGNAVALALGFSHPVEHALPAGVTAECPTATEIVLRGVDKQLVGQVAADIRAYRAPEPYKGKGVRYANEQVRTKEAKKK</sequence>
<keyword id="KW-1185">Reference proteome</keyword>
<keyword id="KW-0687">Ribonucleoprotein</keyword>
<keyword id="KW-0689">Ribosomal protein</keyword>
<keyword id="KW-0694">RNA-binding</keyword>
<keyword id="KW-0699">rRNA-binding</keyword>
<protein>
    <recommendedName>
        <fullName evidence="1">Large ribosomal subunit protein uL6</fullName>
    </recommendedName>
    <alternativeName>
        <fullName evidence="2">50S ribosomal protein L6</fullName>
    </alternativeName>
</protein>
<gene>
    <name evidence="1" type="primary">rplF</name>
    <name type="ordered locus">AHA_0324</name>
</gene>
<feature type="chain" id="PRO_1000055189" description="Large ribosomal subunit protein uL6">
    <location>
        <begin position="1"/>
        <end position="177"/>
    </location>
</feature>
<accession>A0KF36</accession>
<dbReference type="EMBL" id="CP000462">
    <property type="protein sequence ID" value="ABK39433.1"/>
    <property type="molecule type" value="Genomic_DNA"/>
</dbReference>
<dbReference type="RefSeq" id="WP_005307981.1">
    <property type="nucleotide sequence ID" value="NC_008570.1"/>
</dbReference>
<dbReference type="RefSeq" id="YP_854858.1">
    <property type="nucleotide sequence ID" value="NC_008570.1"/>
</dbReference>
<dbReference type="SMR" id="A0KF36"/>
<dbReference type="STRING" id="380703.AHA_0324"/>
<dbReference type="EnsemblBacteria" id="ABK39433">
    <property type="protein sequence ID" value="ABK39433"/>
    <property type="gene ID" value="AHA_0324"/>
</dbReference>
<dbReference type="GeneID" id="47843601"/>
<dbReference type="KEGG" id="aha:AHA_0324"/>
<dbReference type="PATRIC" id="fig|380703.7.peg.313"/>
<dbReference type="eggNOG" id="COG0097">
    <property type="taxonomic scope" value="Bacteria"/>
</dbReference>
<dbReference type="HOGENOM" id="CLU_065464_1_2_6"/>
<dbReference type="OrthoDB" id="9805007at2"/>
<dbReference type="PRO" id="PR:A0KF36"/>
<dbReference type="Proteomes" id="UP000000756">
    <property type="component" value="Chromosome"/>
</dbReference>
<dbReference type="GO" id="GO:0022625">
    <property type="term" value="C:cytosolic large ribosomal subunit"/>
    <property type="evidence" value="ECO:0007669"/>
    <property type="project" value="TreeGrafter"/>
</dbReference>
<dbReference type="GO" id="GO:0019843">
    <property type="term" value="F:rRNA binding"/>
    <property type="evidence" value="ECO:0007669"/>
    <property type="project" value="UniProtKB-UniRule"/>
</dbReference>
<dbReference type="GO" id="GO:0003735">
    <property type="term" value="F:structural constituent of ribosome"/>
    <property type="evidence" value="ECO:0007669"/>
    <property type="project" value="InterPro"/>
</dbReference>
<dbReference type="GO" id="GO:0002181">
    <property type="term" value="P:cytoplasmic translation"/>
    <property type="evidence" value="ECO:0007669"/>
    <property type="project" value="TreeGrafter"/>
</dbReference>
<dbReference type="FunFam" id="3.90.930.12:FF:000001">
    <property type="entry name" value="50S ribosomal protein L6"/>
    <property type="match status" value="1"/>
</dbReference>
<dbReference type="FunFam" id="3.90.930.12:FF:000002">
    <property type="entry name" value="50S ribosomal protein L6"/>
    <property type="match status" value="1"/>
</dbReference>
<dbReference type="Gene3D" id="3.90.930.12">
    <property type="entry name" value="Ribosomal protein L6, alpha-beta domain"/>
    <property type="match status" value="2"/>
</dbReference>
<dbReference type="HAMAP" id="MF_01365_B">
    <property type="entry name" value="Ribosomal_uL6_B"/>
    <property type="match status" value="1"/>
</dbReference>
<dbReference type="InterPro" id="IPR000702">
    <property type="entry name" value="Ribosomal_uL6-like"/>
</dbReference>
<dbReference type="InterPro" id="IPR036789">
    <property type="entry name" value="Ribosomal_uL6-like_a/b-dom_sf"/>
</dbReference>
<dbReference type="InterPro" id="IPR020040">
    <property type="entry name" value="Ribosomal_uL6_a/b-dom"/>
</dbReference>
<dbReference type="InterPro" id="IPR019906">
    <property type="entry name" value="Ribosomal_uL6_bac-type"/>
</dbReference>
<dbReference type="InterPro" id="IPR002358">
    <property type="entry name" value="Ribosomal_uL6_CS"/>
</dbReference>
<dbReference type="NCBIfam" id="TIGR03654">
    <property type="entry name" value="L6_bact"/>
    <property type="match status" value="1"/>
</dbReference>
<dbReference type="PANTHER" id="PTHR11655">
    <property type="entry name" value="60S/50S RIBOSOMAL PROTEIN L6/L9"/>
    <property type="match status" value="1"/>
</dbReference>
<dbReference type="PANTHER" id="PTHR11655:SF14">
    <property type="entry name" value="LARGE RIBOSOMAL SUBUNIT PROTEIN UL6M"/>
    <property type="match status" value="1"/>
</dbReference>
<dbReference type="Pfam" id="PF00347">
    <property type="entry name" value="Ribosomal_L6"/>
    <property type="match status" value="2"/>
</dbReference>
<dbReference type="PIRSF" id="PIRSF002162">
    <property type="entry name" value="Ribosomal_L6"/>
    <property type="match status" value="1"/>
</dbReference>
<dbReference type="PRINTS" id="PR00059">
    <property type="entry name" value="RIBOSOMALL6"/>
</dbReference>
<dbReference type="SUPFAM" id="SSF56053">
    <property type="entry name" value="Ribosomal protein L6"/>
    <property type="match status" value="2"/>
</dbReference>
<dbReference type="PROSITE" id="PS00525">
    <property type="entry name" value="RIBOSOMAL_L6_1"/>
    <property type="match status" value="1"/>
</dbReference>